<organism>
    <name type="scientific">Oleidesulfovibrio alaskensis (strain ATCC BAA-1058 / DSM 17464 / G20)</name>
    <name type="common">Desulfovibrio alaskensis</name>
    <dbReference type="NCBI Taxonomy" id="207559"/>
    <lineage>
        <taxon>Bacteria</taxon>
        <taxon>Pseudomonadati</taxon>
        <taxon>Thermodesulfobacteriota</taxon>
        <taxon>Desulfovibrionia</taxon>
        <taxon>Desulfovibrionales</taxon>
        <taxon>Desulfovibrionaceae</taxon>
        <taxon>Oleidesulfovibrio</taxon>
    </lineage>
</organism>
<name>MNMG_OLEA2</name>
<gene>
    <name evidence="1" type="primary">mnmG</name>
    <name evidence="1" type="synonym">gidA</name>
    <name type="ordered locus">Dde_1809</name>
</gene>
<reference key="1">
    <citation type="journal article" date="2011" name="J. Bacteriol.">
        <title>Complete genome sequence and updated annotation of Desulfovibrio alaskensis G20.</title>
        <authorList>
            <person name="Hauser L.J."/>
            <person name="Land M.L."/>
            <person name="Brown S.D."/>
            <person name="Larimer F."/>
            <person name="Keller K.L."/>
            <person name="Rapp-Giles B.J."/>
            <person name="Price M.N."/>
            <person name="Lin M."/>
            <person name="Bruce D.C."/>
            <person name="Detter J.C."/>
            <person name="Tapia R."/>
            <person name="Han C.S."/>
            <person name="Goodwin L.A."/>
            <person name="Cheng J.F."/>
            <person name="Pitluck S."/>
            <person name="Copeland A."/>
            <person name="Lucas S."/>
            <person name="Nolan M."/>
            <person name="Lapidus A.L."/>
            <person name="Palumbo A.V."/>
            <person name="Wall J.D."/>
        </authorList>
    </citation>
    <scope>NUCLEOTIDE SEQUENCE [LARGE SCALE GENOMIC DNA]</scope>
    <source>
        <strain>ATCC BAA-1058 / DSM 17464 / G20</strain>
    </source>
</reference>
<feature type="chain" id="PRO_0000345264" description="tRNA uridine 5-carboxymethylaminomethyl modification enzyme MnmG">
    <location>
        <begin position="1"/>
        <end position="628"/>
    </location>
</feature>
<feature type="binding site" evidence="1">
    <location>
        <begin position="18"/>
        <end position="23"/>
    </location>
    <ligand>
        <name>FAD</name>
        <dbReference type="ChEBI" id="CHEBI:57692"/>
    </ligand>
</feature>
<feature type="binding site" evidence="1">
    <location>
        <begin position="277"/>
        <end position="291"/>
    </location>
    <ligand>
        <name>NAD(+)</name>
        <dbReference type="ChEBI" id="CHEBI:57540"/>
    </ligand>
</feature>
<comment type="function">
    <text evidence="1">NAD-binding protein involved in the addition of a carboxymethylaminomethyl (cmnm) group at the wobble position (U34) of certain tRNAs, forming tRNA-cmnm(5)s(2)U34.</text>
</comment>
<comment type="cofactor">
    <cofactor evidence="1">
        <name>FAD</name>
        <dbReference type="ChEBI" id="CHEBI:57692"/>
    </cofactor>
</comment>
<comment type="subunit">
    <text evidence="1">Homodimer. Heterotetramer of two MnmE and two MnmG subunits.</text>
</comment>
<comment type="subcellular location">
    <subcellularLocation>
        <location evidence="1">Cytoplasm</location>
    </subcellularLocation>
</comment>
<comment type="similarity">
    <text evidence="1">Belongs to the MnmG family.</text>
</comment>
<sequence length="628" mass="68416">MSVKKASFPELFDLVVVGAGHAGCEAAMASARLGLKTLLLTINADRIGHLSCNPAIGGLAKGHMVKEIDALGGMMGLWADEAGIQFRLLNTSKGPAVHSTRAQIDRDAYMKAVQRDVFRQDNLWVWQDTAENVLVENGRAAGVSTLLGQEFRSRAVCVTAGTFMSGLIHVGLTHFSGGRLGDPAAQGLSASLRAVGLELGRLKTGTTPRLLRDSINFDVMVEQPGDNPPRPFSFRSRHARMPQVPCYLTWTNEATHEAIRAGFDRSPMFTGIISGTGARYCPSIEDKIARFPDKDRHQIFIEPEGLHSPEVYPGGIPTSLPLDVQKAMIATIPGLEKAQIVRPGYAIEYDYANPTQLKPTLETKVLPGLWMAGQVNGTSGYEEAAAQGLWAALNIFCGLRGLPAFIPGRDEAYMAVLVDDLVTKGTLEPYRMFTSRAEHRLLLRENNADSRLTPAGRSLGLVDDAQWQLYTAKKTALEQLLAELDARQVRPDAATRDIFVHMNEAVPTRSVSLADLLRRPALGITDLQAFGLETDGFAADVLEEAQTIVKYSGYLKRQEELVLRTARHESVVISEAADYAAVHGLTREAVEKLSKVRPRTLGQAARISGITPAALSCIEVYLKKNGWL</sequence>
<evidence type="ECO:0000255" key="1">
    <source>
        <dbReference type="HAMAP-Rule" id="MF_00129"/>
    </source>
</evidence>
<protein>
    <recommendedName>
        <fullName evidence="1">tRNA uridine 5-carboxymethylaminomethyl modification enzyme MnmG</fullName>
    </recommendedName>
    <alternativeName>
        <fullName evidence="1">Glucose-inhibited division protein A</fullName>
    </alternativeName>
</protein>
<proteinExistence type="inferred from homology"/>
<dbReference type="EMBL" id="CP000112">
    <property type="protein sequence ID" value="ABB38606.1"/>
    <property type="molecule type" value="Genomic_DNA"/>
</dbReference>
<dbReference type="RefSeq" id="WP_011367734.1">
    <property type="nucleotide sequence ID" value="NC_007519.1"/>
</dbReference>
<dbReference type="SMR" id="Q310P0"/>
<dbReference type="STRING" id="207559.Dde_1809"/>
<dbReference type="KEGG" id="dde:Dde_1809"/>
<dbReference type="eggNOG" id="COG0445">
    <property type="taxonomic scope" value="Bacteria"/>
</dbReference>
<dbReference type="HOGENOM" id="CLU_007831_2_2_7"/>
<dbReference type="Proteomes" id="UP000002710">
    <property type="component" value="Chromosome"/>
</dbReference>
<dbReference type="GO" id="GO:0005829">
    <property type="term" value="C:cytosol"/>
    <property type="evidence" value="ECO:0007669"/>
    <property type="project" value="TreeGrafter"/>
</dbReference>
<dbReference type="GO" id="GO:0050660">
    <property type="term" value="F:flavin adenine dinucleotide binding"/>
    <property type="evidence" value="ECO:0007669"/>
    <property type="project" value="UniProtKB-UniRule"/>
</dbReference>
<dbReference type="GO" id="GO:0030488">
    <property type="term" value="P:tRNA methylation"/>
    <property type="evidence" value="ECO:0007669"/>
    <property type="project" value="TreeGrafter"/>
</dbReference>
<dbReference type="GO" id="GO:0002098">
    <property type="term" value="P:tRNA wobble uridine modification"/>
    <property type="evidence" value="ECO:0007669"/>
    <property type="project" value="InterPro"/>
</dbReference>
<dbReference type="FunFam" id="1.10.150.570:FF:000001">
    <property type="entry name" value="tRNA uridine 5-carboxymethylaminomethyl modification enzyme MnmG"/>
    <property type="match status" value="1"/>
</dbReference>
<dbReference type="FunFam" id="3.50.50.60:FF:000002">
    <property type="entry name" value="tRNA uridine 5-carboxymethylaminomethyl modification enzyme MnmG"/>
    <property type="match status" value="1"/>
</dbReference>
<dbReference type="Gene3D" id="3.50.50.60">
    <property type="entry name" value="FAD/NAD(P)-binding domain"/>
    <property type="match status" value="2"/>
</dbReference>
<dbReference type="Gene3D" id="1.10.150.570">
    <property type="entry name" value="GidA associated domain, C-terminal subdomain"/>
    <property type="match status" value="1"/>
</dbReference>
<dbReference type="Gene3D" id="1.10.10.1800">
    <property type="entry name" value="tRNA uridine 5-carboxymethylaminomethyl modification enzyme MnmG/GidA"/>
    <property type="match status" value="1"/>
</dbReference>
<dbReference type="HAMAP" id="MF_00129">
    <property type="entry name" value="MnmG_GidA"/>
    <property type="match status" value="1"/>
</dbReference>
<dbReference type="InterPro" id="IPR036188">
    <property type="entry name" value="FAD/NAD-bd_sf"/>
</dbReference>
<dbReference type="InterPro" id="IPR049312">
    <property type="entry name" value="GIDA_C_N"/>
</dbReference>
<dbReference type="InterPro" id="IPR004416">
    <property type="entry name" value="MnmG"/>
</dbReference>
<dbReference type="InterPro" id="IPR002218">
    <property type="entry name" value="MnmG-rel"/>
</dbReference>
<dbReference type="InterPro" id="IPR020595">
    <property type="entry name" value="MnmG-rel_CS"/>
</dbReference>
<dbReference type="InterPro" id="IPR026904">
    <property type="entry name" value="MnmG_C"/>
</dbReference>
<dbReference type="InterPro" id="IPR047001">
    <property type="entry name" value="MnmG_C_subdom"/>
</dbReference>
<dbReference type="InterPro" id="IPR044920">
    <property type="entry name" value="MnmG_C_subdom_sf"/>
</dbReference>
<dbReference type="InterPro" id="IPR040131">
    <property type="entry name" value="MnmG_N"/>
</dbReference>
<dbReference type="NCBIfam" id="TIGR00136">
    <property type="entry name" value="mnmG_gidA"/>
    <property type="match status" value="1"/>
</dbReference>
<dbReference type="PANTHER" id="PTHR11806">
    <property type="entry name" value="GLUCOSE INHIBITED DIVISION PROTEIN A"/>
    <property type="match status" value="1"/>
</dbReference>
<dbReference type="PANTHER" id="PTHR11806:SF0">
    <property type="entry name" value="PROTEIN MTO1 HOMOLOG, MITOCHONDRIAL"/>
    <property type="match status" value="1"/>
</dbReference>
<dbReference type="Pfam" id="PF01134">
    <property type="entry name" value="GIDA"/>
    <property type="match status" value="1"/>
</dbReference>
<dbReference type="Pfam" id="PF21680">
    <property type="entry name" value="GIDA_C_1st"/>
    <property type="match status" value="1"/>
</dbReference>
<dbReference type="Pfam" id="PF13932">
    <property type="entry name" value="SAM_GIDA_C"/>
    <property type="match status" value="1"/>
</dbReference>
<dbReference type="SMART" id="SM01228">
    <property type="entry name" value="GIDA_assoc_3"/>
    <property type="match status" value="1"/>
</dbReference>
<dbReference type="SUPFAM" id="SSF51905">
    <property type="entry name" value="FAD/NAD(P)-binding domain"/>
    <property type="match status" value="1"/>
</dbReference>
<dbReference type="PROSITE" id="PS01280">
    <property type="entry name" value="GIDA_1"/>
    <property type="match status" value="1"/>
</dbReference>
<accession>Q310P0</accession>
<keyword id="KW-0963">Cytoplasm</keyword>
<keyword id="KW-0274">FAD</keyword>
<keyword id="KW-0285">Flavoprotein</keyword>
<keyword id="KW-0520">NAD</keyword>
<keyword id="KW-1185">Reference proteome</keyword>
<keyword id="KW-0819">tRNA processing</keyword>